<keyword id="KW-0256">Endoplasmic reticulum</keyword>
<keyword id="KW-0325">Glycoprotein</keyword>
<keyword id="KW-0408">Iron</keyword>
<keyword id="KW-0472">Membrane</keyword>
<keyword id="KW-0479">Metal-binding</keyword>
<keyword id="KW-0503">Monooxygenase</keyword>
<keyword id="KW-0560">Oxidoreductase</keyword>
<keyword id="KW-1185">Reference proteome</keyword>
<keyword id="KW-0812">Transmembrane</keyword>
<keyword id="KW-1133">Transmembrane helix</keyword>
<gene>
    <name evidence="12" type="primary">patI</name>
    <name type="ORF">PEX2_082860</name>
</gene>
<sequence length="526" mass="60437">MDILQLAPTHLLAILLSSTSALFLITYLLRAGHRPSDLPNGPPTVPLFGNELQVPKSDAHFQFSRWAKEYGGFFTLKRYNNTTIVISDQKLIKTLLDKKSNIYSHRPASLVSHLITQSDHLLVMQYGERWRMLRKTIHQYFMEPRCERDHWKVQEAEAKQMLHDYLTMPEDHMLHPKRYSNSITNSLVFGIRTKTVHDEYMKKLFYLMDKWSLVQELGATPPVDSFALLRYVPQWMLGNWRNRAVEVGDLMQSLYQTVLDQVKERRQRGIQRDSFMDRVLDTLKQTPLSENELRFLGGVLMEGGSDTSSSLILTIIQAMTKYPEVQAKAHAQIDSIIGHNRSPAWSDWSKLPYINMIIKESHRWRPVSPLGVPHAVAEDDHIDGKLIPQGSSIVLNVWGMHHDSDRWQEPEHFQPERFADFPALASGYAGSERRDHLGYGAGRRICPGIHLAERNLIIGIAKLLWAFEFLEPLGSDSDISAHSGASKGFLHCPKDYGCVIRLRSPEKRETIMREFAEAQEVFARFD</sequence>
<dbReference type="EC" id="1.-.-.-" evidence="11"/>
<dbReference type="EMBL" id="KF899892">
    <property type="protein sequence ID" value="AIG62145.1"/>
    <property type="molecule type" value="Genomic_DNA"/>
</dbReference>
<dbReference type="EMBL" id="JQFZ01000262">
    <property type="protein sequence ID" value="KGO52639.1"/>
    <property type="molecule type" value="Genomic_DNA"/>
</dbReference>
<dbReference type="RefSeq" id="XP_016595369.1">
    <property type="nucleotide sequence ID" value="XM_016745556.1"/>
</dbReference>
<dbReference type="SMR" id="A0A075TMP8"/>
<dbReference type="STRING" id="27334.A0A075TMP8"/>
<dbReference type="GlyCosmos" id="A0A075TMP8">
    <property type="glycosylation" value="1 site, No reported glycans"/>
</dbReference>
<dbReference type="GeneID" id="27680976"/>
<dbReference type="VEuPathDB" id="FungiDB:PEXP_094440"/>
<dbReference type="HOGENOM" id="CLU_001570_2_1_1"/>
<dbReference type="OrthoDB" id="1103324at2759"/>
<dbReference type="PhylomeDB" id="A0A075TMP8"/>
<dbReference type="UniPathway" id="UPA00918"/>
<dbReference type="Proteomes" id="UP000030143">
    <property type="component" value="Unassembled WGS sequence"/>
</dbReference>
<dbReference type="GO" id="GO:0005783">
    <property type="term" value="C:endoplasmic reticulum"/>
    <property type="evidence" value="ECO:0000314"/>
    <property type="project" value="GO_Central"/>
</dbReference>
<dbReference type="GO" id="GO:0005789">
    <property type="term" value="C:endoplasmic reticulum membrane"/>
    <property type="evidence" value="ECO:0007669"/>
    <property type="project" value="UniProtKB-SubCell"/>
</dbReference>
<dbReference type="GO" id="GO:0020037">
    <property type="term" value="F:heme binding"/>
    <property type="evidence" value="ECO:0007669"/>
    <property type="project" value="InterPro"/>
</dbReference>
<dbReference type="GO" id="GO:0005506">
    <property type="term" value="F:iron ion binding"/>
    <property type="evidence" value="ECO:0007669"/>
    <property type="project" value="InterPro"/>
</dbReference>
<dbReference type="GO" id="GO:0004497">
    <property type="term" value="F:monooxygenase activity"/>
    <property type="evidence" value="ECO:0000314"/>
    <property type="project" value="GO_Central"/>
</dbReference>
<dbReference type="GO" id="GO:0016705">
    <property type="term" value="F:oxidoreductase activity, acting on paired donors, with incorporation or reduction of molecular oxygen"/>
    <property type="evidence" value="ECO:0007669"/>
    <property type="project" value="InterPro"/>
</dbReference>
<dbReference type="GO" id="GO:0016218">
    <property type="term" value="F:polyketide synthase activity"/>
    <property type="evidence" value="ECO:0000314"/>
    <property type="project" value="UniProt"/>
</dbReference>
<dbReference type="GO" id="GO:0140723">
    <property type="term" value="P:patulin biosynthetic process"/>
    <property type="evidence" value="ECO:0000314"/>
    <property type="project" value="GO_Central"/>
</dbReference>
<dbReference type="CDD" id="cd11065">
    <property type="entry name" value="CYP64-like"/>
    <property type="match status" value="1"/>
</dbReference>
<dbReference type="Gene3D" id="1.10.630.10">
    <property type="entry name" value="Cytochrome P450"/>
    <property type="match status" value="1"/>
</dbReference>
<dbReference type="InterPro" id="IPR001128">
    <property type="entry name" value="Cyt_P450"/>
</dbReference>
<dbReference type="InterPro" id="IPR002401">
    <property type="entry name" value="Cyt_P450_E_grp-I"/>
</dbReference>
<dbReference type="InterPro" id="IPR036396">
    <property type="entry name" value="Cyt_P450_sf"/>
</dbReference>
<dbReference type="InterPro" id="IPR050364">
    <property type="entry name" value="Cytochrome_P450_fung"/>
</dbReference>
<dbReference type="PANTHER" id="PTHR46300:SF2">
    <property type="entry name" value="CYTOCHROME P450 MONOOXYGENASE ALNH-RELATED"/>
    <property type="match status" value="1"/>
</dbReference>
<dbReference type="PANTHER" id="PTHR46300">
    <property type="entry name" value="P450, PUTATIVE (EUROFUNG)-RELATED-RELATED"/>
    <property type="match status" value="1"/>
</dbReference>
<dbReference type="Pfam" id="PF00067">
    <property type="entry name" value="p450"/>
    <property type="match status" value="1"/>
</dbReference>
<dbReference type="PRINTS" id="PR00463">
    <property type="entry name" value="EP450I"/>
</dbReference>
<dbReference type="SUPFAM" id="SSF48264">
    <property type="entry name" value="Cytochrome P450"/>
    <property type="match status" value="1"/>
</dbReference>
<accession>A0A075TMP8</accession>
<name>PATI_PENEN</name>
<feature type="chain" id="PRO_0000445922" description="Cytochrome P450 monooxygenase patI">
    <location>
        <begin position="1"/>
        <end position="526"/>
    </location>
</feature>
<feature type="topological domain" description="Cytoplasmic" evidence="13">
    <location>
        <begin position="1"/>
        <end position="6"/>
    </location>
</feature>
<feature type="transmembrane region" description="Helical" evidence="2">
    <location>
        <begin position="7"/>
        <end position="29"/>
    </location>
</feature>
<feature type="topological domain" description="Lumenal" evidence="13">
    <location>
        <begin position="30"/>
        <end position="526"/>
    </location>
</feature>
<feature type="binding site" description="axial binding residue" evidence="1">
    <location>
        <position position="446"/>
    </location>
    <ligand>
        <name>heme</name>
        <dbReference type="ChEBI" id="CHEBI:30413"/>
    </ligand>
    <ligandPart>
        <name>Fe</name>
        <dbReference type="ChEBI" id="CHEBI:18248"/>
    </ligandPart>
</feature>
<feature type="glycosylation site" description="N-linked (GlcNAc...) asparagine" evidence="3">
    <location>
        <position position="81"/>
    </location>
</feature>
<protein>
    <recommendedName>
        <fullName evidence="12">Cytochrome P450 monooxygenase patI</fullName>
        <ecNumber evidence="11">1.-.-.-</ecNumber>
    </recommendedName>
    <alternativeName>
        <fullName evidence="12">Patulin biosynthesis cluster protein I</fullName>
    </alternativeName>
    <alternativeName>
        <fullName evidence="12">m-hydroxybenzyl alcohol hydroxylase</fullName>
    </alternativeName>
</protein>
<evidence type="ECO:0000250" key="1">
    <source>
        <dbReference type="UniProtKB" id="P04798"/>
    </source>
</evidence>
<evidence type="ECO:0000255" key="2"/>
<evidence type="ECO:0000255" key="3">
    <source>
        <dbReference type="PROSITE-ProRule" id="PRU00498"/>
    </source>
</evidence>
<evidence type="ECO:0000269" key="4">
    <source>
    </source>
</evidence>
<evidence type="ECO:0000269" key="5">
    <source>
    </source>
</evidence>
<evidence type="ECO:0000269" key="6">
    <source>
    </source>
</evidence>
<evidence type="ECO:0000269" key="7">
    <source>
    </source>
</evidence>
<evidence type="ECO:0000269" key="8">
    <source>
    </source>
</evidence>
<evidence type="ECO:0000269" key="9">
    <source>
    </source>
</evidence>
<evidence type="ECO:0000269" key="10">
    <source>
    </source>
</evidence>
<evidence type="ECO:0000269" key="11">
    <source>
    </source>
</evidence>
<evidence type="ECO:0000303" key="12">
    <source>
    </source>
</evidence>
<evidence type="ECO:0000305" key="13"/>
<evidence type="ECO:0000305" key="14">
    <source>
    </source>
</evidence>
<reference key="1">
    <citation type="journal article" date="2014" name="Int. J. Food Microbiol.">
        <title>Sequencing, physical organization and kinetic expression of the patulin biosynthetic gene cluster from Penicillium expansum.</title>
        <authorList>
            <person name="Tannous J."/>
            <person name="El Khoury R."/>
            <person name="Snini S.P."/>
            <person name="Lippi Y."/>
            <person name="El Khoury A."/>
            <person name="Atoui A."/>
            <person name="Lteif R."/>
            <person name="Oswald I.P."/>
            <person name="Puel O."/>
        </authorList>
    </citation>
    <scope>NUCLEOTIDE SEQUENCE [GENOMIC DNA]</scope>
    <scope>IDENTIFICATION</scope>
    <scope>INDUCTION</scope>
    <source>
        <strain>NRRL 35695</strain>
    </source>
</reference>
<reference key="2">
    <citation type="journal article" date="2015" name="Mol. Plant Microbe Interact.">
        <title>Genome, transcriptome, and functional analyses of Penicillium expansum provide new insights into secondary metabolism and pathogenicity.</title>
        <authorList>
            <person name="Ballester A.R."/>
            <person name="Marcet-Houben M."/>
            <person name="Levin E."/>
            <person name="Sela N."/>
            <person name="Selma-Lazaro C."/>
            <person name="Carmona L."/>
            <person name="Wisniewski M."/>
            <person name="Droby S."/>
            <person name="Gonzalez-Candelas L."/>
            <person name="Gabaldon T."/>
        </authorList>
    </citation>
    <scope>NUCLEOTIDE SEQUENCE [LARGE SCALE GENOMIC DNA]</scope>
    <source>
        <strain>MD-8</strain>
    </source>
</reference>
<reference key="3">
    <citation type="journal article" date="2004" name="Int. J. Epidemiol.">
        <title>Clinical trial of patulin in the common cold. 1944.</title>
        <authorList>
            <consortium name="Patulin Clinical Trials Committee, Medical Research Council"/>
        </authorList>
    </citation>
    <scope>BIOTECHNOLOGY</scope>
</reference>
<reference key="4">
    <citation type="journal article" date="2012" name="Food Chem. Toxicol.">
        <title>DNA damage in organs of mice treated acutely with patulin, a known mycotoxin.</title>
        <authorList>
            <person name="de Melo F.T."/>
            <person name="de Oliveira I.M."/>
            <person name="Greggio S."/>
            <person name="Dacosta J.C."/>
            <person name="Guecheva T.N."/>
            <person name="Saffi J."/>
            <person name="Henriques J.A."/>
            <person name="Rosa R.M."/>
        </authorList>
    </citation>
    <scope>BIOTECHNOLOGY</scope>
</reference>
<reference key="5">
    <citation type="journal article" date="2016" name="Tumor Biol.">
        <title>The potential effect of patulin on mice bearing melanoma cells: an anti-tumour or carcinogenic effect?</title>
        <authorList>
            <person name="Boussabbeh M."/>
            <person name="Ben Salem I."/>
            <person name="Rjiba-Touati K."/>
            <person name="Bouyahya C."/>
            <person name="Neffati F."/>
            <person name="Najjar M.F."/>
            <person name="Bacha H."/>
            <person name="Abid-Essefi S."/>
        </authorList>
    </citation>
    <scope>BIOTECHNOLOGY</scope>
</reference>
<reference key="6">
    <citation type="journal article" date="2017" name="Mol. Plant Pathol.">
        <title>LaeA regulation of secondary metabolism modulates virulence in Penicillium expansum and is mediated by sucrose.</title>
        <authorList>
            <person name="Kumar D."/>
            <person name="Barad S."/>
            <person name="Chen Y."/>
            <person name="Luo X."/>
            <person name="Tannous J."/>
            <person name="Dubey A."/>
            <person name="Glam Matana N."/>
            <person name="Tian S."/>
            <person name="Li B."/>
            <person name="Keller N."/>
            <person name="Prusky D."/>
        </authorList>
    </citation>
    <scope>INDUCTION</scope>
</reference>
<reference key="7">
    <citation type="journal article" date="2018" name="Front. Plant Sci.">
        <title>Apple intrinsic factors modulating the global regulator, LaeA, the patulin gene cluster and patulin accumulation during fruit colonization by Penicillium expansum.</title>
        <authorList>
            <person name="Kumar D."/>
            <person name="Tannous J."/>
            <person name="Sionov E."/>
            <person name="Keller N."/>
            <person name="Prusky D."/>
        </authorList>
    </citation>
    <scope>FUNCTION</scope>
    <scope>INDUCTION</scope>
</reference>
<reference key="8">
    <citation type="journal article" date="2015" name="Mol. Plant Microbe Interact.">
        <title>Genomic characterization reveals insights into patulin biosynthesis and pathogenicity in Penicillium species.</title>
        <authorList>
            <person name="Li B."/>
            <person name="Zong Y."/>
            <person name="Du Z."/>
            <person name="Chen Y."/>
            <person name="Zhang Z."/>
            <person name="Qin G."/>
            <person name="Zhao W."/>
            <person name="Tian S."/>
        </authorList>
    </citation>
    <scope>FUNCTION</scope>
    <scope>INDUCTION</scope>
</reference>
<reference key="9">
    <citation type="journal article" date="2019" name="Environ. Microbiol.">
        <title>Dissection of patulin biosynthesis, spatial control and regulation mechanism in Penicillium expansum.</title>
        <authorList>
            <person name="Li B."/>
            <person name="Chen Y."/>
            <person name="Zong Y."/>
            <person name="Shang Y."/>
            <person name="Zhang Z."/>
            <person name="Xu X."/>
            <person name="Wang X."/>
            <person name="Long M."/>
            <person name="Tian S."/>
        </authorList>
    </citation>
    <scope>FUNCTION</scope>
    <scope>DISRUPTION PHENOTYPE</scope>
    <scope>SUBCELLULAR LOCATION</scope>
    <scope>CATALYTIC ACTIVITY</scope>
    <scope>INDUCTION</scope>
    <scope>PATHWAY</scope>
</reference>
<proteinExistence type="evidence at protein level"/>
<organism>
    <name type="scientific">Penicillium expansum</name>
    <name type="common">Blue mold rot fungus</name>
    <dbReference type="NCBI Taxonomy" id="27334"/>
    <lineage>
        <taxon>Eukaryota</taxon>
        <taxon>Fungi</taxon>
        <taxon>Dikarya</taxon>
        <taxon>Ascomycota</taxon>
        <taxon>Pezizomycotina</taxon>
        <taxon>Eurotiomycetes</taxon>
        <taxon>Eurotiomycetidae</taxon>
        <taxon>Eurotiales</taxon>
        <taxon>Aspergillaceae</taxon>
        <taxon>Penicillium</taxon>
    </lineage>
</organism>
<comment type="function">
    <text evidence="7 10 11 14">Cytochrome P450 monooxygenase; part of the gene cluster that mediates the biosynthesis of patulin, an acetate-derived tetraketide mycotoxin produced by several fungal species that shows antimicrobial properties against several bacteria (PubMed:25625822, PubMed:30100914, PubMed:30680886). PatI catalyzes the conversion of m-hydroxybenzyl alcohol into gentisyl alcohol (PubMed:30680886). The pathway begins with the synthesis of 6-methylsalicylic acid by the polyketide synthase (PKS) patK via condensation of acetate and malonate units. The 6-methylsalicylic acid decarboxylase patG then catalyzes the decarboxylation of 6-methylsalicylic acid to yield m-cresol (also known as 3-methylphenol). These first reactions occur in the cytosol. The intermediate m-cresol is then transported into the endoplasmic reticulum where the cytochrome P450 monooxygenase patH converts it to m-hydroxybenzyl alcohol, which is further converted to gentisyl alcohol by the cytochrome P450 monooxygenase patI. The oxidoreductases patJ and patO further convert gentisyl alcohol to isoepoxydon in the vacuole. PatN catalyzes then the transformation of isoepoxydon into phyllostine. The cluster protein patF is responsible for the conversion from phyllostine to neopatulin whereas the alcohol dehydrogenase patD converts neopatulin to E-ascladiol. The steps between isoepoxydon and E-ascladiol occur in the cytosol, and E-ascladiol is probably secreted to the extracellular space by one of the cluster-specific transporters patC or patM. Finally, the secreted patulin synthase patE catalyzes the conversion of E-ascladiol to patulin (Probable) (PubMed:30680886).</text>
</comment>
<comment type="catalytic activity">
    <reaction evidence="11">
        <text>3-hydroxybenzyl alcohol + reduced [NADPH--hemoprotein reductase] + O2 = gentisyl alcohol + oxidized [NADPH--hemoprotein reductase] + H2O + H(+)</text>
        <dbReference type="Rhea" id="RHEA:62212"/>
        <dbReference type="Rhea" id="RHEA-COMP:11964"/>
        <dbReference type="Rhea" id="RHEA-COMP:11965"/>
        <dbReference type="ChEBI" id="CHEBI:5325"/>
        <dbReference type="ChEBI" id="CHEBI:15377"/>
        <dbReference type="ChEBI" id="CHEBI:15378"/>
        <dbReference type="ChEBI" id="CHEBI:15379"/>
        <dbReference type="ChEBI" id="CHEBI:17069"/>
        <dbReference type="ChEBI" id="CHEBI:57618"/>
        <dbReference type="ChEBI" id="CHEBI:58210"/>
    </reaction>
    <physiologicalReaction direction="left-to-right" evidence="11">
        <dbReference type="Rhea" id="RHEA:62213"/>
    </physiologicalReaction>
</comment>
<comment type="cofactor">
    <cofactor evidence="1">
        <name>heme</name>
        <dbReference type="ChEBI" id="CHEBI:30413"/>
    </cofactor>
</comment>
<comment type="pathway">
    <text evidence="11">Mycotoxin biosynthesis; patulin biosynthesis.</text>
</comment>
<comment type="subcellular location">
    <subcellularLocation>
        <location evidence="11">Endoplasmic reticulum membrane</location>
        <topology evidence="11">Single-pass membrane protein</topology>
    </subcellularLocation>
</comment>
<comment type="induction">
    <text evidence="6 7 9 10 11">Expression is correlated with the production of patulin (PubMed:25120234). Expression is positively regulated by the secondary metabolism regulator laeA (PubMed:27528575, PubMed:30100914). Expression is strongly decreased with increased sucrose concentrations. This decrease is lost in the presence of malic acid (PubMed:30100914). Expression is increased with pH changes from 2.5 to 3.5 in the presence of a limiting concentration of sucrose, 50 mM (PubMed:30100914). Natural phenols present in apple fruits such as chlorogenic acid or the flavonoid epicatechin modulate patulin biosynthesis. They increase expression in the absence of sucrose, have little impact in the presence of 15 mM sucrose, and decrease expression in 175 mM sucrose (PubMed:30100914). Expression is positively regulated by the patulin cluster-specific transcription factor patL (PubMed:25625822). Finally, expression is also positively regulated by the velvet family proteins transcription regulators veA, velB, velC, but not vosA (PubMed:30680886).</text>
</comment>
<comment type="disruption phenotype">
    <text evidence="11">Completely abolishes the production of patulin and shows significant slower colony expansion.</text>
</comment>
<comment type="biotechnology">
    <text evidence="4 5 8">Patulin was originally used as an antibiotic and specifically trialed to be used against the common cold, but it is no longer used for that purpose since it has been shown to induce immunological, neurological and gastrointestinal effects (PubMed:15082620). Genotoxic effects of patulin with dose-dependent increase in DNA strand breaks in brain, liver and kidneys have been detected in mice (PubMed:22222931). However, more recently, it has been proposed that patulin might also have anti-tumor properties (PubMed:26619846).</text>
</comment>
<comment type="similarity">
    <text evidence="13">Belongs to the cytochrome P450 family.</text>
</comment>